<comment type="similarity">
    <text evidence="1">Belongs to the bacterial ribosomal protein bL32 family.</text>
</comment>
<organism>
    <name type="scientific">Synechococcus sp. (strain WH7803)</name>
    <dbReference type="NCBI Taxonomy" id="32051"/>
    <lineage>
        <taxon>Bacteria</taxon>
        <taxon>Bacillati</taxon>
        <taxon>Cyanobacteriota</taxon>
        <taxon>Cyanophyceae</taxon>
        <taxon>Synechococcales</taxon>
        <taxon>Synechococcaceae</taxon>
        <taxon>Synechococcus</taxon>
    </lineage>
</organism>
<reference key="1">
    <citation type="submission" date="2006-05" db="EMBL/GenBank/DDBJ databases">
        <authorList>
            <consortium name="Genoscope"/>
        </authorList>
    </citation>
    <scope>NUCLEOTIDE SEQUENCE [LARGE SCALE GENOMIC DNA]</scope>
    <source>
        <strain>WH7803</strain>
    </source>
</reference>
<keyword id="KW-1185">Reference proteome</keyword>
<keyword id="KW-0687">Ribonucleoprotein</keyword>
<keyword id="KW-0689">Ribosomal protein</keyword>
<sequence>MAVPKKKTSKSKRNQRHAVWKAKAATAAQRALSIGKSVLSGRAQGFVYPVAEADDSES</sequence>
<dbReference type="EMBL" id="CT971583">
    <property type="protein sequence ID" value="CAK23541.1"/>
    <property type="molecule type" value="Genomic_DNA"/>
</dbReference>
<dbReference type="SMR" id="A5GKS6"/>
<dbReference type="STRING" id="32051.SynWH7803_1115"/>
<dbReference type="KEGG" id="syx:SynWH7803_1115"/>
<dbReference type="eggNOG" id="COG0333">
    <property type="taxonomic scope" value="Bacteria"/>
</dbReference>
<dbReference type="HOGENOM" id="CLU_199882_0_0_3"/>
<dbReference type="Proteomes" id="UP000001566">
    <property type="component" value="Chromosome"/>
</dbReference>
<dbReference type="GO" id="GO:0015934">
    <property type="term" value="C:large ribosomal subunit"/>
    <property type="evidence" value="ECO:0007669"/>
    <property type="project" value="InterPro"/>
</dbReference>
<dbReference type="GO" id="GO:0003735">
    <property type="term" value="F:structural constituent of ribosome"/>
    <property type="evidence" value="ECO:0007669"/>
    <property type="project" value="InterPro"/>
</dbReference>
<dbReference type="GO" id="GO:0006412">
    <property type="term" value="P:translation"/>
    <property type="evidence" value="ECO:0007669"/>
    <property type="project" value="UniProtKB-UniRule"/>
</dbReference>
<dbReference type="Gene3D" id="1.20.5.640">
    <property type="entry name" value="Single helix bin"/>
    <property type="match status" value="1"/>
</dbReference>
<dbReference type="HAMAP" id="MF_00340">
    <property type="entry name" value="Ribosomal_bL32"/>
    <property type="match status" value="1"/>
</dbReference>
<dbReference type="InterPro" id="IPR002677">
    <property type="entry name" value="Ribosomal_bL32"/>
</dbReference>
<dbReference type="InterPro" id="IPR044958">
    <property type="entry name" value="Ribosomal_bL32_plant/cyanobact"/>
</dbReference>
<dbReference type="InterPro" id="IPR011332">
    <property type="entry name" value="Ribosomal_zn-bd"/>
</dbReference>
<dbReference type="NCBIfam" id="TIGR01031">
    <property type="entry name" value="rpmF_bact"/>
    <property type="match status" value="1"/>
</dbReference>
<dbReference type="PANTHER" id="PTHR36083">
    <property type="entry name" value="50S RIBOSOMAL PROTEIN L32, CHLOROPLASTIC"/>
    <property type="match status" value="1"/>
</dbReference>
<dbReference type="PANTHER" id="PTHR36083:SF1">
    <property type="entry name" value="LARGE RIBOSOMAL SUBUNIT PROTEIN BL32C"/>
    <property type="match status" value="1"/>
</dbReference>
<dbReference type="Pfam" id="PF01783">
    <property type="entry name" value="Ribosomal_L32p"/>
    <property type="match status" value="1"/>
</dbReference>
<dbReference type="SUPFAM" id="SSF57829">
    <property type="entry name" value="Zn-binding ribosomal proteins"/>
    <property type="match status" value="1"/>
</dbReference>
<protein>
    <recommendedName>
        <fullName evidence="1">Large ribosomal subunit protein bL32</fullName>
    </recommendedName>
    <alternativeName>
        <fullName evidence="2">50S ribosomal protein L32</fullName>
    </alternativeName>
</protein>
<proteinExistence type="inferred from homology"/>
<accession>A5GKS6</accession>
<name>RL32_SYNPW</name>
<evidence type="ECO:0000255" key="1">
    <source>
        <dbReference type="HAMAP-Rule" id="MF_00340"/>
    </source>
</evidence>
<evidence type="ECO:0000305" key="2"/>
<feature type="chain" id="PRO_0000296588" description="Large ribosomal subunit protein bL32">
    <location>
        <begin position="1"/>
        <end position="58"/>
    </location>
</feature>
<gene>
    <name evidence="1" type="primary">rpmF</name>
    <name evidence="1" type="synonym">rpl32</name>
    <name type="ordered locus">SynWH7803_1115</name>
</gene>